<keyword id="KW-0045">Antibiotic biosynthesis</keyword>
<keyword id="KW-0170">Cobalt</keyword>
<keyword id="KW-0456">Lyase</keyword>
<keyword id="KW-0479">Metal-binding</keyword>
<keyword id="KW-0520">NAD</keyword>
<reference key="1">
    <citation type="journal article" date="2004" name="FEMS Microbiol. Lett.">
        <title>Isolation and characterization of the tobramycin biosynthetic gene cluster from Streptomyces tenebrarius.</title>
        <authorList>
            <person name="Kharel M.K."/>
            <person name="Basnet D.B."/>
            <person name="Lee H.C."/>
            <person name="Liou K."/>
            <person name="Woo J.S."/>
            <person name="Kim B.-G."/>
            <person name="Sohng J.K."/>
        </authorList>
    </citation>
    <scope>NUCLEOTIDE SEQUENCE [GENOMIC DNA]</scope>
    <scope>FUNCTION</scope>
</reference>
<reference key="2">
    <citation type="submission" date="2004-08" db="EMBL/GenBank/DDBJ databases">
        <title>Comparison of the gene clusters for the biosynthesis of the aminoglycoside antibiotics tobramycin-apramycin (Streptomyces tenebrarius DSM 40477), and hygromycin B (Streptomyces hygroscopicus subsp. hygroscopicus DSM 40578).</title>
        <authorList>
            <person name="Aboshanab K.M.A."/>
            <person name="Schmidt-Beissner H."/>
            <person name="Wehmeier U.F."/>
            <person name="Welzel K."/>
            <person name="Vente A."/>
            <person name="Piepersberg W."/>
        </authorList>
    </citation>
    <scope>NUCLEOTIDE SEQUENCE [GENOMIC DNA]</scope>
</reference>
<feature type="chain" id="PRO_0000234041" description="2-deoxy-scyllo-inosose synthase">
    <location>
        <begin position="1"/>
        <end position="386"/>
    </location>
</feature>
<feature type="active site" evidence="1">
    <location>
        <position position="142"/>
    </location>
</feature>
<feature type="active site" evidence="1">
    <location>
        <position position="244"/>
    </location>
</feature>
<feature type="binding site" evidence="1">
    <location>
        <position position="42"/>
    </location>
    <ligand>
        <name>NAD(+)</name>
        <dbReference type="ChEBI" id="CHEBI:57540"/>
    </ligand>
</feature>
<feature type="binding site" evidence="1">
    <location>
        <begin position="73"/>
        <end position="76"/>
    </location>
    <ligand>
        <name>NAD(+)</name>
        <dbReference type="ChEBI" id="CHEBI:57540"/>
    </ligand>
</feature>
<feature type="binding site" evidence="1">
    <location>
        <begin position="105"/>
        <end position="109"/>
    </location>
    <ligand>
        <name>NAD(+)</name>
        <dbReference type="ChEBI" id="CHEBI:57540"/>
    </ligand>
</feature>
<feature type="binding site" evidence="1">
    <location>
        <begin position="129"/>
        <end position="130"/>
    </location>
    <ligand>
        <name>NAD(+)</name>
        <dbReference type="ChEBI" id="CHEBI:57540"/>
    </ligand>
</feature>
<feature type="binding site" evidence="1">
    <location>
        <begin position="140"/>
        <end position="142"/>
    </location>
    <ligand>
        <name>NAD(+)</name>
        <dbReference type="ChEBI" id="CHEBI:57540"/>
    </ligand>
</feature>
<feature type="binding site" evidence="1">
    <location>
        <begin position="151"/>
        <end position="152"/>
    </location>
    <ligand>
        <name>NAD(+)</name>
        <dbReference type="ChEBI" id="CHEBI:57540"/>
    </ligand>
</feature>
<feature type="binding site" evidence="1">
    <location>
        <position position="184"/>
    </location>
    <ligand>
        <name>Co(2+)</name>
        <dbReference type="ChEBI" id="CHEBI:48828"/>
    </ligand>
</feature>
<feature type="binding site" evidence="1">
    <location>
        <position position="247"/>
    </location>
    <ligand>
        <name>Co(2+)</name>
        <dbReference type="ChEBI" id="CHEBI:48828"/>
    </ligand>
</feature>
<feature type="binding site" evidence="1">
    <location>
        <position position="263"/>
    </location>
    <ligand>
        <name>Co(2+)</name>
        <dbReference type="ChEBI" id="CHEBI:48828"/>
    </ligand>
</feature>
<evidence type="ECO:0000250" key="1">
    <source>
        <dbReference type="UniProtKB" id="Q9S5E2"/>
    </source>
</evidence>
<evidence type="ECO:0000269" key="2">
    <source>
    </source>
</evidence>
<evidence type="ECO:0000305" key="3"/>
<protein>
    <recommendedName>
        <fullName>2-deoxy-scyllo-inosose synthase</fullName>
        <shortName>DOI synthase</shortName>
        <shortName>DOIS</shortName>
        <ecNumber>4.2.3.124</ecNumber>
    </recommendedName>
</protein>
<comment type="function">
    <text evidence="2">Catalyzes the intramolecular carbocycle formation from D-glucose-6-phosphate to 2-deoxy-scyllo-inosose (DOI).</text>
</comment>
<comment type="catalytic activity">
    <reaction>
        <text>D-glucose 6-phosphate = 2-deoxy-L-scyllo-inosose + phosphate</text>
        <dbReference type="Rhea" id="RHEA:33071"/>
        <dbReference type="ChEBI" id="CHEBI:43474"/>
        <dbReference type="ChEBI" id="CHEBI:61548"/>
        <dbReference type="ChEBI" id="CHEBI:64796"/>
        <dbReference type="EC" id="4.2.3.124"/>
    </reaction>
</comment>
<comment type="cofactor">
    <cofactor evidence="1">
        <name>NAD(+)</name>
        <dbReference type="ChEBI" id="CHEBI:57540"/>
    </cofactor>
</comment>
<comment type="cofactor">
    <cofactor evidence="1">
        <name>Co(2+)</name>
        <dbReference type="ChEBI" id="CHEBI:48828"/>
    </cofactor>
    <text evidence="1">Binds 1 Co(2+) ion per subunit.</text>
</comment>
<comment type="pathway">
    <text>Metabolic intermediate biosynthesis; 2-deoxystreptamine biosynthesis; 2-deoxystreptamine from D-glucose 6-phosphate: step 1/4.</text>
</comment>
<comment type="pathway">
    <text>Antibiotic biosynthesis; tobramycin biosynthesis.</text>
</comment>
<comment type="similarity">
    <text evidence="3">Belongs to the sugar phosphate cyclases superfamily. DOI synthase family.</text>
</comment>
<sequence length="386" mass="40662">MQTTTITMGDVQYPYRLGTGCVDGIVTRLGELEASHYLVLCDATVAELYGHDLAARLRRSAGPASVLTHPAGEEHKGLGTLDTLADAALHAGVDRRGVVVALGGGVTGNIAGLLAALLFRGIRLVHVPTTVVAMLDSVLSLKQAVNAQVGKNLVGTFYPPVEVLADTAMLGTLPVREIRSGLCEVVKNALAIRPSMIDFLAAELRPDGRYADDVLRWMIDESVAAKAQVTEHDKYERREGLVLEYGHTVGHALEHASHGAVSHGAGVGVGMVAAAEVARRLGHVDADLVELHRELVGKVGVATTLPADVPTEEITYRLGFDNKRGYQPLPADHYAMVLLADVGQPLYQDGLPLTPAPRALVDEVVRELADAPSRIGASVGSAGGAS</sequence>
<name>DOIS_STRSD</name>
<proteinExistence type="inferred from homology"/>
<dbReference type="EC" id="4.2.3.124"/>
<dbReference type="EMBL" id="AJ579650">
    <property type="protein sequence ID" value="CAE22471.1"/>
    <property type="molecule type" value="Genomic_RNA"/>
</dbReference>
<dbReference type="EMBL" id="AJ810851">
    <property type="protein sequence ID" value="CAH18556.1"/>
    <property type="molecule type" value="Genomic_DNA"/>
</dbReference>
<dbReference type="RefSeq" id="WP_253672093.1">
    <property type="nucleotide sequence ID" value="NZ_JAMTCP010000038.1"/>
</dbReference>
<dbReference type="SMR" id="Q2MF16"/>
<dbReference type="BRENDA" id="4.2.3.124">
    <property type="organism ID" value="7970"/>
</dbReference>
<dbReference type="UniPathway" id="UPA00907">
    <property type="reaction ID" value="UER00921"/>
</dbReference>
<dbReference type="UniPathway" id="UPA00971"/>
<dbReference type="GO" id="GO:0003856">
    <property type="term" value="F:3-dehydroquinate synthase activity"/>
    <property type="evidence" value="ECO:0007669"/>
    <property type="project" value="TreeGrafter"/>
</dbReference>
<dbReference type="GO" id="GO:0046872">
    <property type="term" value="F:metal ion binding"/>
    <property type="evidence" value="ECO:0007669"/>
    <property type="project" value="UniProtKB-KW"/>
</dbReference>
<dbReference type="GO" id="GO:0017000">
    <property type="term" value="P:antibiotic biosynthetic process"/>
    <property type="evidence" value="ECO:0007669"/>
    <property type="project" value="UniProtKB-KW"/>
</dbReference>
<dbReference type="GO" id="GO:0009073">
    <property type="term" value="P:aromatic amino acid family biosynthetic process"/>
    <property type="evidence" value="ECO:0007669"/>
    <property type="project" value="InterPro"/>
</dbReference>
<dbReference type="CDD" id="cd08197">
    <property type="entry name" value="DOIS"/>
    <property type="match status" value="1"/>
</dbReference>
<dbReference type="Gene3D" id="3.40.50.1970">
    <property type="match status" value="1"/>
</dbReference>
<dbReference type="Gene3D" id="1.20.1090.10">
    <property type="entry name" value="Dehydroquinate synthase-like - alpha domain"/>
    <property type="match status" value="1"/>
</dbReference>
<dbReference type="InterPro" id="IPR050071">
    <property type="entry name" value="Dehydroquinate_synthase"/>
</dbReference>
<dbReference type="InterPro" id="IPR030963">
    <property type="entry name" value="DHQ_synth_fam"/>
</dbReference>
<dbReference type="InterPro" id="IPR030960">
    <property type="entry name" value="DHQS/DOIS_N"/>
</dbReference>
<dbReference type="InterPro" id="IPR056179">
    <property type="entry name" value="DHQS_C"/>
</dbReference>
<dbReference type="PANTHER" id="PTHR43622">
    <property type="entry name" value="3-DEHYDROQUINATE SYNTHASE"/>
    <property type="match status" value="1"/>
</dbReference>
<dbReference type="PANTHER" id="PTHR43622:SF1">
    <property type="entry name" value="3-DEHYDROQUINATE SYNTHASE"/>
    <property type="match status" value="1"/>
</dbReference>
<dbReference type="Pfam" id="PF01761">
    <property type="entry name" value="DHQ_synthase"/>
    <property type="match status" value="1"/>
</dbReference>
<dbReference type="Pfam" id="PF24621">
    <property type="entry name" value="DHQS_C"/>
    <property type="match status" value="1"/>
</dbReference>
<dbReference type="PIRSF" id="PIRSF001455">
    <property type="entry name" value="DHQ_synth"/>
    <property type="match status" value="1"/>
</dbReference>
<dbReference type="SUPFAM" id="SSF56796">
    <property type="entry name" value="Dehydroquinate synthase-like"/>
    <property type="match status" value="1"/>
</dbReference>
<gene>
    <name type="primary">tbmA</name>
    <name type="synonym">tobC</name>
</gene>
<organism>
    <name type="scientific">Streptoalloteichus tenebrarius (strain ATCC 17920 / DSM 40477 / JCM 4838 / CBS 697.72 / NBRC 16177 / NCIMB 11028 / NRRL B-12390 / A12253. 1 / ISP 5477)</name>
    <name type="common">Streptomyces tenebrarius</name>
    <dbReference type="NCBI Taxonomy" id="1933"/>
    <lineage>
        <taxon>Bacteria</taxon>
        <taxon>Bacillati</taxon>
        <taxon>Actinomycetota</taxon>
        <taxon>Actinomycetes</taxon>
        <taxon>Pseudonocardiales</taxon>
        <taxon>Pseudonocardiaceae</taxon>
        <taxon>Streptoalloteichus</taxon>
    </lineage>
</organism>
<accession>Q2MF16</accession>
<accession>Q70IY3</accession>